<keyword id="KW-0008">Acetylcholine receptor inhibiting toxin</keyword>
<keyword id="KW-0165">Cleavage on pair of basic residues</keyword>
<keyword id="KW-0903">Direct protein sequencing</keyword>
<keyword id="KW-1015">Disulfide bond</keyword>
<keyword id="KW-0872">Ion channel impairing toxin</keyword>
<keyword id="KW-0166">Nematocyst</keyword>
<keyword id="KW-0528">Neurotoxin</keyword>
<keyword id="KW-0629">Postsynaptic neurotoxin</keyword>
<keyword id="KW-1275">Proton-gated sodium channel impairing toxin</keyword>
<keyword id="KW-0964">Secreted</keyword>
<keyword id="KW-0732">Signal</keyword>
<keyword id="KW-0800">Toxin</keyword>
<name>BDSB5_HETMG</name>
<proteinExistence type="evidence at protein level"/>
<sequence>MDYQRLLFLFAVAMVITTTVALPQDTALMDGQLQKRGTPCKCLGYTGVYWFMITRCPNGHGYNLSCPYFLGVCCVKK</sequence>
<protein>
    <recommendedName>
        <fullName evidence="5">Pi-stichotoxin-Hmg5a</fullName>
        <shortName evidence="5">Pi-SHTX-Hmg5a</shortName>
    </recommendedName>
    <alternativeName>
        <fullName evidence="4">Pi-AnmTX Hmg 1b-5</fullName>
    </alternativeName>
</protein>
<comment type="function">
    <text evidence="3">Toxin that inhibits rat ASIC3 channels (IC(50)=13.8 uM) (PubMed:36287966). Also able to bind T.californica muscle-type nicotinic acetylcholine receptors (nAChR), and human alpha-7/CHRNA7 nicotinic acetylcholine receptors (PubMed:36287966).</text>
</comment>
<comment type="subcellular location">
    <subcellularLocation>
        <location evidence="3">Secreted</location>
    </subcellularLocation>
    <subcellularLocation>
        <location evidence="6">Nematocyst</location>
    </subcellularLocation>
</comment>
<comment type="mass spectrometry">
    <text>Monoisotopic mass.</text>
</comment>
<comment type="miscellaneous">
    <text evidence="5">A synonymy between H.magnifica and R.crispa is controversial.</text>
</comment>
<comment type="miscellaneous">
    <text evidence="3">Negative results: does not inhibit rat ASICa channels.</text>
</comment>
<comment type="similarity">
    <text evidence="5">Belongs to the sea anemone type 3 (BDS) potassium channel toxin family.</text>
</comment>
<accession>C0HLS4</accession>
<feature type="signal peptide" evidence="2">
    <location>
        <begin position="1"/>
        <end position="21"/>
    </location>
</feature>
<feature type="propeptide" id="PRO_0000458045" evidence="3">
    <location>
        <begin position="22"/>
        <end position="34"/>
    </location>
</feature>
<feature type="peptide" id="PRO_0000458046" description="Pi-stichotoxin-Hmg5a" evidence="3">
    <location>
        <begin position="37"/>
        <end position="77"/>
    </location>
</feature>
<feature type="disulfide bond" evidence="1">
    <location>
        <begin position="40"/>
        <end position="73"/>
    </location>
</feature>
<feature type="disulfide bond" evidence="1">
    <location>
        <begin position="42"/>
        <end position="66"/>
    </location>
</feature>
<feature type="disulfide bond" evidence="1">
    <location>
        <begin position="56"/>
        <end position="74"/>
    </location>
</feature>
<reference key="1">
    <citation type="journal article" date="2022" name="Toxins">
        <title>Nicotinic acetylcholine receptors are novel targets of APETx-like toxins from the sea anemone Heteractis magnifica.</title>
        <authorList>
            <person name="Kalina R.S."/>
            <person name="Kasheverov I.E."/>
            <person name="Koshelev S.G."/>
            <person name="Sintsova O.V."/>
            <person name="Peigneur S."/>
            <person name="Pinheiro-Junior E.L."/>
            <person name="Popov R.S."/>
            <person name="Chausova V.E."/>
            <person name="Monastyrnaya M.M."/>
            <person name="Dmitrenok P.S."/>
            <person name="Isaeva M.P."/>
            <person name="Tytgat J."/>
            <person name="Kozlov S.A."/>
            <person name="Kozlovskaya E.P."/>
            <person name="Leychenko E.V."/>
            <person name="Gladkikh I.N."/>
        </authorList>
    </citation>
    <scope>NUCLEOTIDE SEQUENCE [MRNA]</scope>
    <scope>PROTEIN SEQUENCE OF 37-77</scope>
    <scope>IDENTIFICATION BY MASS SPECTROMETRY</scope>
    <scope>FUNCTION</scope>
    <scope>SUBCELLULAR LOCATION</scope>
</reference>
<organism>
    <name type="scientific">Heteractis magnifica</name>
    <name type="common">Magnificent sea anemone</name>
    <name type="synonym">Radianthus magnifica</name>
    <dbReference type="NCBI Taxonomy" id="38281"/>
    <lineage>
        <taxon>Eukaryota</taxon>
        <taxon>Metazoa</taxon>
        <taxon>Cnidaria</taxon>
        <taxon>Anthozoa</taxon>
        <taxon>Hexacorallia</taxon>
        <taxon>Actiniaria</taxon>
        <taxon>Stichodactylidae</taxon>
        <taxon>Heteractis</taxon>
    </lineage>
</organism>
<evidence type="ECO:0000250" key="1">
    <source>
        <dbReference type="UniProtKB" id="P61541"/>
    </source>
</evidence>
<evidence type="ECO:0000255" key="2"/>
<evidence type="ECO:0000269" key="3">
    <source>
    </source>
</evidence>
<evidence type="ECO:0000303" key="4">
    <source>
    </source>
</evidence>
<evidence type="ECO:0000305" key="5"/>
<evidence type="ECO:0000305" key="6">
    <source>
    </source>
</evidence>
<dbReference type="SMR" id="C0HLS4"/>
<dbReference type="GO" id="GO:0005576">
    <property type="term" value="C:extracellular region"/>
    <property type="evidence" value="ECO:0000314"/>
    <property type="project" value="UniProtKB"/>
</dbReference>
<dbReference type="GO" id="GO:0042151">
    <property type="term" value="C:nematocyst"/>
    <property type="evidence" value="ECO:0000314"/>
    <property type="project" value="UniProtKB"/>
</dbReference>
<dbReference type="GO" id="GO:0019871">
    <property type="term" value="F:sodium channel inhibitor activity"/>
    <property type="evidence" value="ECO:0000314"/>
    <property type="project" value="UniProtKB"/>
</dbReference>
<dbReference type="GO" id="GO:0090729">
    <property type="term" value="F:toxin activity"/>
    <property type="evidence" value="ECO:0000314"/>
    <property type="project" value="UniProtKB"/>
</dbReference>
<dbReference type="Gene3D" id="2.20.20.10">
    <property type="entry name" value="Anthopleurin-A"/>
    <property type="match status" value="1"/>
</dbReference>
<dbReference type="InterPro" id="IPR012414">
    <property type="entry name" value="BDS_K_chnl_tox"/>
</dbReference>
<dbReference type="InterPro" id="IPR023355">
    <property type="entry name" value="Myo_ane_neurotoxin_sf"/>
</dbReference>
<dbReference type="Pfam" id="PF07936">
    <property type="entry name" value="Defensin_4"/>
    <property type="match status" value="1"/>
</dbReference>